<evidence type="ECO:0000250" key="1">
    <source>
        <dbReference type="UniProtKB" id="P83923"/>
    </source>
</evidence>
<evidence type="ECO:0000250" key="2">
    <source>
        <dbReference type="UniProtKB" id="P84375"/>
    </source>
</evidence>
<evidence type="ECO:0000255" key="3"/>
<evidence type="ECO:0000269" key="4">
    <source>
    </source>
</evidence>
<evidence type="ECO:0000303" key="5">
    <source>
    </source>
</evidence>
<evidence type="ECO:0000305" key="6"/>
<organism>
    <name type="scientific">Taumantis sigiana</name>
    <name type="common">Lime green praying mantis</name>
    <name type="synonym">Taumantis ehrmannii</name>
    <dbReference type="NCBI Taxonomy" id="765348"/>
    <lineage>
        <taxon>Eukaryota</taxon>
        <taxon>Metazoa</taxon>
        <taxon>Ecdysozoa</taxon>
        <taxon>Arthropoda</taxon>
        <taxon>Hexapoda</taxon>
        <taxon>Insecta</taxon>
        <taxon>Pterygota</taxon>
        <taxon>Neoptera</taxon>
        <taxon>Polyneoptera</taxon>
        <taxon>Dictyoptera</taxon>
        <taxon>Mantodea</taxon>
        <taxon>Eumantodea</taxon>
        <taxon>Mantoidea</taxon>
        <taxon>Mantidae</taxon>
        <taxon>Miomantinae</taxon>
        <taxon>Miomantini</taxon>
        <taxon>Taumantis</taxon>
    </lineage>
</organism>
<proteinExistence type="evidence at protein level"/>
<sequence>QGLIPFPRV</sequence>
<comment type="function">
    <text evidence="1">Mediates visceral muscle contractile activity (myotropic activity).</text>
</comment>
<comment type="subcellular location">
    <subcellularLocation>
        <location evidence="2">Secreted</location>
    </subcellularLocation>
</comment>
<comment type="mass spectrometry"/>
<comment type="mass spectrometry">
    <text>With pyroglutamate at Gln-1.</text>
</comment>
<comment type="similarity">
    <text evidence="3">Belongs to the periviscerokinin family.</text>
</comment>
<dbReference type="GO" id="GO:0005576">
    <property type="term" value="C:extracellular region"/>
    <property type="evidence" value="ECO:0007669"/>
    <property type="project" value="UniProtKB-SubCell"/>
</dbReference>
<dbReference type="GO" id="GO:0007218">
    <property type="term" value="P:neuropeptide signaling pathway"/>
    <property type="evidence" value="ECO:0007669"/>
    <property type="project" value="UniProtKB-KW"/>
</dbReference>
<dbReference type="InterPro" id="IPR013231">
    <property type="entry name" value="Periviscerokinin"/>
</dbReference>
<dbReference type="Pfam" id="PF08259">
    <property type="entry name" value="Periviscerokin"/>
    <property type="match status" value="1"/>
</dbReference>
<feature type="peptide" id="PRO_0000395579" description="Periviscerokinin-1" evidence="4">
    <location>
        <begin position="1"/>
        <end position="9"/>
    </location>
</feature>
<feature type="modified residue" description="Pyrrolidone carboxylic acid; partial" evidence="4">
    <location>
        <position position="1"/>
    </location>
</feature>
<feature type="modified residue" description="Valine amide" evidence="4">
    <location>
        <position position="9"/>
    </location>
</feature>
<feature type="unsure residue" description="L or I" evidence="4">
    <location>
        <position position="3"/>
    </location>
</feature>
<feature type="unsure residue" description="I or L" evidence="4">
    <location>
        <position position="4"/>
    </location>
</feature>
<keyword id="KW-0027">Amidation</keyword>
<keyword id="KW-0903">Direct protein sequencing</keyword>
<keyword id="KW-0527">Neuropeptide</keyword>
<keyword id="KW-0873">Pyrrolidone carboxylic acid</keyword>
<keyword id="KW-0964">Secreted</keyword>
<accession>P86673</accession>
<protein>
    <recommendedName>
        <fullName evidence="5">Periviscerokinin-1</fullName>
    </recommendedName>
</protein>
<reference evidence="6" key="1">
    <citation type="journal article" date="2010" name="Peptides">
        <title>CAPA-peptides of praying mantids (Mantodea).</title>
        <authorList>
            <person name="Koehler R."/>
            <person name="Predel R."/>
        </authorList>
    </citation>
    <scope>PROTEIN SEQUENCE</scope>
    <scope>MASS SPECTROMETRY</scope>
    <scope>PYROGLUTAMATE FORMATION AT GLN-1</scope>
    <scope>AMIDATION AT VAL-9</scope>
    <source>
        <tissue evidence="4">Abdominal perisympathetic organs</tissue>
    </source>
</reference>
<name>PVK1_TAUSI</name>